<keyword id="KW-0002">3D-structure</keyword>
<keyword id="KW-0963">Cytoplasm</keyword>
<keyword id="KW-0256">Endoplasmic reticulum</keyword>
<keyword id="KW-1185">Reference proteome</keyword>
<keyword id="KW-0687">Ribonucleoprotein</keyword>
<keyword id="KW-0689">Ribosomal protein</keyword>
<comment type="function">
    <text evidence="1">Component of the small ribosomal subunit. The ribosome is a large ribonucleoprotein complex responsible for the synthesis of proteins in the cell.</text>
</comment>
<comment type="subunit">
    <text evidence="1">Component of the 40S small ribosomal subunit.</text>
</comment>
<comment type="subcellular location">
    <subcellularLocation>
        <location evidence="1">Cytoplasm</location>
        <location evidence="1">Cytosol</location>
    </subcellularLocation>
    <subcellularLocation>
        <location evidence="1">Cytoplasm</location>
    </subcellularLocation>
    <subcellularLocation>
        <location evidence="2">Rough endoplasmic reticulum</location>
    </subcellularLocation>
    <text evidence="1 2">Detected on cytosolic polysomes (By similarity). Detected in ribosomes that are associated with the rough endoplasmic reticulum (By similarity).</text>
</comment>
<comment type="similarity">
    <text evidence="3">Belongs to the eukaryotic ribosomal protein eS21 family.</text>
</comment>
<protein>
    <recommendedName>
        <fullName evidence="3">Small ribosomal subunit protein eS21</fullName>
    </recommendedName>
    <alternativeName>
        <fullName>40S ribosomal protein S21</fullName>
    </alternativeName>
</protein>
<sequence>MQNDAGEFVDLYVPRKCSASNRIIGAKDHASIQINIAEVDKVTGRFNSQYKTYAICGAIRRMGESDDSIMRLAKNDGIVSKNF</sequence>
<organism>
    <name type="scientific">Xenopus laevis</name>
    <name type="common">African clawed frog</name>
    <dbReference type="NCBI Taxonomy" id="8355"/>
    <lineage>
        <taxon>Eukaryota</taxon>
        <taxon>Metazoa</taxon>
        <taxon>Chordata</taxon>
        <taxon>Craniata</taxon>
        <taxon>Vertebrata</taxon>
        <taxon>Euteleostomi</taxon>
        <taxon>Amphibia</taxon>
        <taxon>Batrachia</taxon>
        <taxon>Anura</taxon>
        <taxon>Pipoidea</taxon>
        <taxon>Pipidae</taxon>
        <taxon>Xenopodinae</taxon>
        <taxon>Xenopus</taxon>
        <taxon>Xenopus</taxon>
    </lineage>
</organism>
<evidence type="ECO:0000250" key="1">
    <source>
        <dbReference type="UniProtKB" id="P63220"/>
    </source>
</evidence>
<evidence type="ECO:0000250" key="2">
    <source>
        <dbReference type="UniProtKB" id="P63221"/>
    </source>
</evidence>
<evidence type="ECO:0000305" key="3"/>
<proteinExistence type="evidence at protein level"/>
<reference key="1">
    <citation type="submission" date="2004-07" db="EMBL/GenBank/DDBJ databases">
        <authorList>
            <consortium name="NIH - Xenopus Gene Collection (XGC) project"/>
        </authorList>
    </citation>
    <scope>NUCLEOTIDE SEQUENCE [LARGE SCALE MRNA]</scope>
    <source>
        <tissue>Spleen</tissue>
    </source>
</reference>
<accession>Q6AZJ9</accession>
<name>RS21_XENLA</name>
<dbReference type="EMBL" id="BC077773">
    <property type="protein sequence ID" value="AAH77773.1"/>
    <property type="molecule type" value="mRNA"/>
</dbReference>
<dbReference type="RefSeq" id="NP_001086924.1">
    <property type="nucleotide sequence ID" value="NM_001093455.1"/>
</dbReference>
<dbReference type="PDB" id="7OYC">
    <property type="method" value="EM"/>
    <property type="resolution" value="2.40 A"/>
    <property type="chains" value="V2=1-83"/>
</dbReference>
<dbReference type="PDBsum" id="7OYC"/>
<dbReference type="EMDB" id="EMD-13113"/>
<dbReference type="SMR" id="Q6AZJ9"/>
<dbReference type="BioGRID" id="103619">
    <property type="interactions" value="3"/>
</dbReference>
<dbReference type="IntAct" id="Q6AZJ9">
    <property type="interactions" value="1"/>
</dbReference>
<dbReference type="GeneID" id="446759"/>
<dbReference type="KEGG" id="xla:446759"/>
<dbReference type="AGR" id="Xenbase:XB-GENE-1007936"/>
<dbReference type="CTD" id="446759"/>
<dbReference type="Xenbase" id="XB-GENE-1007936">
    <property type="gene designation" value="rps21.S"/>
</dbReference>
<dbReference type="OMA" id="AMDRLWQ"/>
<dbReference type="OrthoDB" id="9434434at2759"/>
<dbReference type="Proteomes" id="UP000186698">
    <property type="component" value="Chromosome 9_10S"/>
</dbReference>
<dbReference type="Bgee" id="446759">
    <property type="expression patterns" value="Expressed in internal ear and 19 other cell types or tissues"/>
</dbReference>
<dbReference type="GO" id="GO:0022627">
    <property type="term" value="C:cytosolic small ribosomal subunit"/>
    <property type="evidence" value="ECO:0000250"/>
    <property type="project" value="UniProtKB"/>
</dbReference>
<dbReference type="GO" id="GO:0005791">
    <property type="term" value="C:rough endoplasmic reticulum"/>
    <property type="evidence" value="ECO:0007669"/>
    <property type="project" value="UniProtKB-SubCell"/>
</dbReference>
<dbReference type="GO" id="GO:0003735">
    <property type="term" value="F:structural constituent of ribosome"/>
    <property type="evidence" value="ECO:0000318"/>
    <property type="project" value="GO_Central"/>
</dbReference>
<dbReference type="GO" id="GO:0002181">
    <property type="term" value="P:cytoplasmic translation"/>
    <property type="evidence" value="ECO:0000250"/>
    <property type="project" value="UniProtKB"/>
</dbReference>
<dbReference type="GO" id="GO:0000447">
    <property type="term" value="P:endonucleolytic cleavage in ITS1 to separate SSU-rRNA from 5.8S rRNA and LSU-rRNA from tricistronic rRNA transcript (SSU-rRNA, 5.8S rRNA, LSU-rRNA)"/>
    <property type="evidence" value="ECO:0000318"/>
    <property type="project" value="GO_Central"/>
</dbReference>
<dbReference type="GO" id="GO:0000461">
    <property type="term" value="P:endonucleolytic cleavage to generate mature 3'-end of SSU-rRNA from (SSU-rRNA, 5.8S rRNA, LSU-rRNA)"/>
    <property type="evidence" value="ECO:0000318"/>
    <property type="project" value="GO_Central"/>
</dbReference>
<dbReference type="FunFam" id="3.30.1230.20:FF:000001">
    <property type="entry name" value="40S ribosomal protein S21"/>
    <property type="match status" value="1"/>
</dbReference>
<dbReference type="Gene3D" id="3.30.1230.20">
    <property type="match status" value="1"/>
</dbReference>
<dbReference type="InterPro" id="IPR001931">
    <property type="entry name" value="Ribosomal_eS21"/>
</dbReference>
<dbReference type="InterPro" id="IPR018279">
    <property type="entry name" value="Ribosomal_eS21_CS"/>
</dbReference>
<dbReference type="InterPro" id="IPR038579">
    <property type="entry name" value="Ribosomal_eS21_sf"/>
</dbReference>
<dbReference type="PANTHER" id="PTHR10442">
    <property type="entry name" value="40S RIBOSOMAL PROTEIN S21"/>
    <property type="match status" value="1"/>
</dbReference>
<dbReference type="Pfam" id="PF01249">
    <property type="entry name" value="Ribosomal_S21e"/>
    <property type="match status" value="1"/>
</dbReference>
<dbReference type="PIRSF" id="PIRSF002148">
    <property type="entry name" value="Ribosomal_S21e"/>
    <property type="match status" value="1"/>
</dbReference>
<dbReference type="PROSITE" id="PS00996">
    <property type="entry name" value="RIBOSOMAL_S21E"/>
    <property type="match status" value="1"/>
</dbReference>
<gene>
    <name type="primary">rps21</name>
</gene>
<feature type="chain" id="PRO_0000194736" description="Small ribosomal subunit protein eS21">
    <location>
        <begin position="1"/>
        <end position="83"/>
    </location>
</feature>